<sequence>MSDQQHSAPQNAAATASPSDSPEAVEATMAAHAADELGRLQNELAELKAKSADLADQFLRAKAEAENARRRADEEVSKARKFGIESFAESLLPVADSLTAALAIKDATIEQLREGTDATLRQLTSALERNKVLAIQPGAGEKFDPHQHQAISMVPAEQEPNTIVSVLQKGYVIADRVLRPALVTVAAPK</sequence>
<protein>
    <recommendedName>
        <fullName evidence="1">Protein GrpE</fullName>
    </recommendedName>
    <alternativeName>
        <fullName evidence="1">HSP-70 cofactor</fullName>
    </alternativeName>
</protein>
<proteinExistence type="inferred from homology"/>
<comment type="function">
    <text evidence="1">Participates actively in the response to hyperosmotic and heat shock by preventing the aggregation of stress-denatured proteins, in association with DnaK and GrpE. It is the nucleotide exchange factor for DnaK and may function as a thermosensor. Unfolded proteins bind initially to DnaJ; upon interaction with the DnaJ-bound protein, DnaK hydrolyzes its bound ATP, resulting in the formation of a stable complex. GrpE releases ADP from DnaK; ATP binding to DnaK triggers the release of the substrate protein, thus completing the reaction cycle. Several rounds of ATP-dependent interactions between DnaJ, DnaK and GrpE are required for fully efficient folding.</text>
</comment>
<comment type="subunit">
    <text evidence="1">Homodimer.</text>
</comment>
<comment type="subcellular location">
    <subcellularLocation>
        <location evidence="1">Cytoplasm</location>
    </subcellularLocation>
</comment>
<comment type="similarity">
    <text evidence="1">Belongs to the GrpE family.</text>
</comment>
<dbReference type="EMBL" id="CP000512">
    <property type="protein sequence ID" value="ABM31818.1"/>
    <property type="molecule type" value="Genomic_DNA"/>
</dbReference>
<dbReference type="RefSeq" id="WP_011794370.1">
    <property type="nucleotide sequence ID" value="NC_008752.1"/>
</dbReference>
<dbReference type="SMR" id="A1TLI0"/>
<dbReference type="STRING" id="397945.Aave_1227"/>
<dbReference type="GeneID" id="79790888"/>
<dbReference type="KEGG" id="aav:Aave_1227"/>
<dbReference type="eggNOG" id="COG0576">
    <property type="taxonomic scope" value="Bacteria"/>
</dbReference>
<dbReference type="HOGENOM" id="CLU_057217_6_0_4"/>
<dbReference type="OrthoDB" id="9789811at2"/>
<dbReference type="Proteomes" id="UP000002596">
    <property type="component" value="Chromosome"/>
</dbReference>
<dbReference type="GO" id="GO:0005829">
    <property type="term" value="C:cytosol"/>
    <property type="evidence" value="ECO:0007669"/>
    <property type="project" value="TreeGrafter"/>
</dbReference>
<dbReference type="GO" id="GO:0000774">
    <property type="term" value="F:adenyl-nucleotide exchange factor activity"/>
    <property type="evidence" value="ECO:0007669"/>
    <property type="project" value="InterPro"/>
</dbReference>
<dbReference type="GO" id="GO:0042803">
    <property type="term" value="F:protein homodimerization activity"/>
    <property type="evidence" value="ECO:0007669"/>
    <property type="project" value="InterPro"/>
</dbReference>
<dbReference type="GO" id="GO:0051087">
    <property type="term" value="F:protein-folding chaperone binding"/>
    <property type="evidence" value="ECO:0007669"/>
    <property type="project" value="InterPro"/>
</dbReference>
<dbReference type="GO" id="GO:0051082">
    <property type="term" value="F:unfolded protein binding"/>
    <property type="evidence" value="ECO:0007669"/>
    <property type="project" value="TreeGrafter"/>
</dbReference>
<dbReference type="GO" id="GO:0006457">
    <property type="term" value="P:protein folding"/>
    <property type="evidence" value="ECO:0007669"/>
    <property type="project" value="InterPro"/>
</dbReference>
<dbReference type="CDD" id="cd00446">
    <property type="entry name" value="GrpE"/>
    <property type="match status" value="1"/>
</dbReference>
<dbReference type="FunFam" id="2.30.22.10:FF:000001">
    <property type="entry name" value="Protein GrpE"/>
    <property type="match status" value="1"/>
</dbReference>
<dbReference type="Gene3D" id="3.90.20.20">
    <property type="match status" value="1"/>
</dbReference>
<dbReference type="Gene3D" id="2.30.22.10">
    <property type="entry name" value="Head domain of nucleotide exchange factor GrpE"/>
    <property type="match status" value="1"/>
</dbReference>
<dbReference type="HAMAP" id="MF_01151">
    <property type="entry name" value="GrpE"/>
    <property type="match status" value="1"/>
</dbReference>
<dbReference type="InterPro" id="IPR000740">
    <property type="entry name" value="GrpE"/>
</dbReference>
<dbReference type="InterPro" id="IPR013805">
    <property type="entry name" value="GrpE_coiled_coil"/>
</dbReference>
<dbReference type="InterPro" id="IPR009012">
    <property type="entry name" value="GrpE_head"/>
</dbReference>
<dbReference type="NCBIfam" id="NF010737">
    <property type="entry name" value="PRK14139.1"/>
    <property type="match status" value="1"/>
</dbReference>
<dbReference type="NCBIfam" id="NF010738">
    <property type="entry name" value="PRK14140.1"/>
    <property type="match status" value="1"/>
</dbReference>
<dbReference type="PANTHER" id="PTHR21237">
    <property type="entry name" value="GRPE PROTEIN"/>
    <property type="match status" value="1"/>
</dbReference>
<dbReference type="PANTHER" id="PTHR21237:SF23">
    <property type="entry name" value="GRPE PROTEIN HOMOLOG, MITOCHONDRIAL"/>
    <property type="match status" value="1"/>
</dbReference>
<dbReference type="Pfam" id="PF01025">
    <property type="entry name" value="GrpE"/>
    <property type="match status" value="1"/>
</dbReference>
<dbReference type="PRINTS" id="PR00773">
    <property type="entry name" value="GRPEPROTEIN"/>
</dbReference>
<dbReference type="SUPFAM" id="SSF58014">
    <property type="entry name" value="Coiled-coil domain of nucleotide exchange factor GrpE"/>
    <property type="match status" value="1"/>
</dbReference>
<dbReference type="SUPFAM" id="SSF51064">
    <property type="entry name" value="Head domain of nucleotide exchange factor GrpE"/>
    <property type="match status" value="1"/>
</dbReference>
<dbReference type="PROSITE" id="PS01071">
    <property type="entry name" value="GRPE"/>
    <property type="match status" value="1"/>
</dbReference>
<name>GRPE_PARC0</name>
<keyword id="KW-0143">Chaperone</keyword>
<keyword id="KW-0963">Cytoplasm</keyword>
<keyword id="KW-0346">Stress response</keyword>
<organism>
    <name type="scientific">Paracidovorax citrulli (strain AAC00-1)</name>
    <name type="common">Acidovorax citrulli</name>
    <dbReference type="NCBI Taxonomy" id="397945"/>
    <lineage>
        <taxon>Bacteria</taxon>
        <taxon>Pseudomonadati</taxon>
        <taxon>Pseudomonadota</taxon>
        <taxon>Betaproteobacteria</taxon>
        <taxon>Burkholderiales</taxon>
        <taxon>Comamonadaceae</taxon>
        <taxon>Paracidovorax</taxon>
    </lineage>
</organism>
<gene>
    <name evidence="1" type="primary">grpE</name>
    <name type="ordered locus">Aave_1227</name>
</gene>
<accession>A1TLI0</accession>
<reference key="1">
    <citation type="submission" date="2006-12" db="EMBL/GenBank/DDBJ databases">
        <title>Complete sequence of Acidovorax avenae subsp. citrulli AAC00-1.</title>
        <authorList>
            <person name="Copeland A."/>
            <person name="Lucas S."/>
            <person name="Lapidus A."/>
            <person name="Barry K."/>
            <person name="Detter J.C."/>
            <person name="Glavina del Rio T."/>
            <person name="Dalin E."/>
            <person name="Tice H."/>
            <person name="Pitluck S."/>
            <person name="Kiss H."/>
            <person name="Brettin T."/>
            <person name="Bruce D."/>
            <person name="Han C."/>
            <person name="Tapia R."/>
            <person name="Gilna P."/>
            <person name="Schmutz J."/>
            <person name="Larimer F."/>
            <person name="Land M."/>
            <person name="Hauser L."/>
            <person name="Kyrpides N."/>
            <person name="Kim E."/>
            <person name="Stahl D."/>
            <person name="Richardson P."/>
        </authorList>
    </citation>
    <scope>NUCLEOTIDE SEQUENCE [LARGE SCALE GENOMIC DNA]</scope>
    <source>
        <strain>AAC00-1</strain>
    </source>
</reference>
<evidence type="ECO:0000255" key="1">
    <source>
        <dbReference type="HAMAP-Rule" id="MF_01151"/>
    </source>
</evidence>
<evidence type="ECO:0000256" key="2">
    <source>
        <dbReference type="SAM" id="MobiDB-lite"/>
    </source>
</evidence>
<feature type="chain" id="PRO_1000053533" description="Protein GrpE">
    <location>
        <begin position="1"/>
        <end position="189"/>
    </location>
</feature>
<feature type="region of interest" description="Disordered" evidence="2">
    <location>
        <begin position="1"/>
        <end position="29"/>
    </location>
</feature>
<feature type="compositionally biased region" description="Polar residues" evidence="2">
    <location>
        <begin position="1"/>
        <end position="20"/>
    </location>
</feature>